<comment type="function">
    <text evidence="1">Converts 2C-methyl-D-erythritol 2,4-cyclodiphosphate (ME-2,4cPP) into 1-hydroxy-2-methyl-2-(E)-butenyl 4-diphosphate.</text>
</comment>
<comment type="catalytic activity">
    <reaction evidence="1">
        <text>(2E)-4-hydroxy-3-methylbut-2-enyl diphosphate + oxidized [flavodoxin] + H2O + 2 H(+) = 2-C-methyl-D-erythritol 2,4-cyclic diphosphate + reduced [flavodoxin]</text>
        <dbReference type="Rhea" id="RHEA:43604"/>
        <dbReference type="Rhea" id="RHEA-COMP:10622"/>
        <dbReference type="Rhea" id="RHEA-COMP:10623"/>
        <dbReference type="ChEBI" id="CHEBI:15377"/>
        <dbReference type="ChEBI" id="CHEBI:15378"/>
        <dbReference type="ChEBI" id="CHEBI:57618"/>
        <dbReference type="ChEBI" id="CHEBI:58210"/>
        <dbReference type="ChEBI" id="CHEBI:58483"/>
        <dbReference type="ChEBI" id="CHEBI:128753"/>
        <dbReference type="EC" id="1.17.7.3"/>
    </reaction>
</comment>
<comment type="cofactor">
    <cofactor evidence="1">
        <name>[4Fe-4S] cluster</name>
        <dbReference type="ChEBI" id="CHEBI:49883"/>
    </cofactor>
    <text evidence="1">Binds 1 [4Fe-4S] cluster.</text>
</comment>
<comment type="pathway">
    <text evidence="1">Isoprenoid biosynthesis; isopentenyl diphosphate biosynthesis via DXP pathway; isopentenyl diphosphate from 1-deoxy-D-xylulose 5-phosphate: step 5/6.</text>
</comment>
<comment type="similarity">
    <text evidence="1">Belongs to the IspG family.</text>
</comment>
<comment type="sequence caution" evidence="2">
    <conflict type="erroneous initiation">
        <sequence resource="EMBL-CDS" id="AAT56480"/>
    </conflict>
</comment>
<protein>
    <recommendedName>
        <fullName evidence="1">4-hydroxy-3-methylbut-2-en-1-yl diphosphate synthase (flavodoxin)</fullName>
        <ecNumber evidence="1">1.17.7.3</ecNumber>
    </recommendedName>
    <alternativeName>
        <fullName evidence="1">1-hydroxy-2-methyl-2-(E)-butenyl 4-diphosphate synthase</fullName>
    </alternativeName>
</protein>
<gene>
    <name evidence="1" type="primary">ispG</name>
    <name type="synonym">gcpE</name>
    <name type="ordered locus">BA_4502</name>
    <name type="ordered locus">GBAA_4502</name>
    <name type="ordered locus">BAS4180</name>
</gene>
<proteinExistence type="evidence at protein level"/>
<reference key="1">
    <citation type="journal article" date="2003" name="Nature">
        <title>The genome sequence of Bacillus anthracis Ames and comparison to closely related bacteria.</title>
        <authorList>
            <person name="Read T.D."/>
            <person name="Peterson S.N."/>
            <person name="Tourasse N.J."/>
            <person name="Baillie L.W."/>
            <person name="Paulsen I.T."/>
            <person name="Nelson K.E."/>
            <person name="Tettelin H."/>
            <person name="Fouts D.E."/>
            <person name="Eisen J.A."/>
            <person name="Gill S.R."/>
            <person name="Holtzapple E.K."/>
            <person name="Okstad O.A."/>
            <person name="Helgason E."/>
            <person name="Rilstone J."/>
            <person name="Wu M."/>
            <person name="Kolonay J.F."/>
            <person name="Beanan M.J."/>
            <person name="Dodson R.J."/>
            <person name="Brinkac L.M."/>
            <person name="Gwinn M.L."/>
            <person name="DeBoy R.T."/>
            <person name="Madpu R."/>
            <person name="Daugherty S.C."/>
            <person name="Durkin A.S."/>
            <person name="Haft D.H."/>
            <person name="Nelson W.C."/>
            <person name="Peterson J.D."/>
            <person name="Pop M."/>
            <person name="Khouri H.M."/>
            <person name="Radune D."/>
            <person name="Benton J.L."/>
            <person name="Mahamoud Y."/>
            <person name="Jiang L."/>
            <person name="Hance I.R."/>
            <person name="Weidman J.F."/>
            <person name="Berry K.J."/>
            <person name="Plaut R.D."/>
            <person name="Wolf A.M."/>
            <person name="Watkins K.L."/>
            <person name="Nierman W.C."/>
            <person name="Hazen A."/>
            <person name="Cline R.T."/>
            <person name="Redmond C."/>
            <person name="Thwaite J.E."/>
            <person name="White O."/>
            <person name="Salzberg S.L."/>
            <person name="Thomason B."/>
            <person name="Friedlander A.M."/>
            <person name="Koehler T.M."/>
            <person name="Hanna P.C."/>
            <person name="Kolstoe A.-B."/>
            <person name="Fraser C.M."/>
        </authorList>
    </citation>
    <scope>NUCLEOTIDE SEQUENCE [LARGE SCALE GENOMIC DNA]</scope>
    <source>
        <strain>Ames / isolate Porton</strain>
    </source>
</reference>
<reference key="2">
    <citation type="journal article" date="2009" name="J. Bacteriol.">
        <title>The complete genome sequence of Bacillus anthracis Ames 'Ancestor'.</title>
        <authorList>
            <person name="Ravel J."/>
            <person name="Jiang L."/>
            <person name="Stanley S.T."/>
            <person name="Wilson M.R."/>
            <person name="Decker R.S."/>
            <person name="Read T.D."/>
            <person name="Worsham P."/>
            <person name="Keim P.S."/>
            <person name="Salzberg S.L."/>
            <person name="Fraser-Liggett C.M."/>
            <person name="Rasko D.A."/>
        </authorList>
    </citation>
    <scope>NUCLEOTIDE SEQUENCE [LARGE SCALE GENOMIC DNA]</scope>
    <source>
        <strain>Ames ancestor</strain>
    </source>
</reference>
<reference key="3">
    <citation type="submission" date="2004-01" db="EMBL/GenBank/DDBJ databases">
        <title>Complete genome sequence of Bacillus anthracis Sterne.</title>
        <authorList>
            <person name="Brettin T.S."/>
            <person name="Bruce D."/>
            <person name="Challacombe J.F."/>
            <person name="Gilna P."/>
            <person name="Han C."/>
            <person name="Hill K."/>
            <person name="Hitchcock P."/>
            <person name="Jackson P."/>
            <person name="Keim P."/>
            <person name="Longmire J."/>
            <person name="Lucas S."/>
            <person name="Okinaka R."/>
            <person name="Richardson P."/>
            <person name="Rubin E."/>
            <person name="Tice H."/>
        </authorList>
    </citation>
    <scope>NUCLEOTIDE SEQUENCE [LARGE SCALE GENOMIC DNA]</scope>
    <source>
        <strain>Sterne</strain>
    </source>
</reference>
<evidence type="ECO:0000255" key="1">
    <source>
        <dbReference type="HAMAP-Rule" id="MF_00159"/>
    </source>
</evidence>
<evidence type="ECO:0000305" key="2"/>
<evidence type="ECO:0007829" key="3">
    <source>
        <dbReference type="PDB" id="4MWA"/>
    </source>
</evidence>
<feature type="chain" id="PRO_0000190527" description="4-hydroxy-3-methylbut-2-en-1-yl diphosphate synthase (flavodoxin)">
    <location>
        <begin position="1"/>
        <end position="367"/>
    </location>
</feature>
<feature type="binding site" evidence="1">
    <location>
        <position position="265"/>
    </location>
    <ligand>
        <name>[4Fe-4S] cluster</name>
        <dbReference type="ChEBI" id="CHEBI:49883"/>
    </ligand>
</feature>
<feature type="binding site" evidence="1">
    <location>
        <position position="268"/>
    </location>
    <ligand>
        <name>[4Fe-4S] cluster</name>
        <dbReference type="ChEBI" id="CHEBI:49883"/>
    </ligand>
</feature>
<feature type="binding site" evidence="1">
    <location>
        <position position="300"/>
    </location>
    <ligand>
        <name>[4Fe-4S] cluster</name>
        <dbReference type="ChEBI" id="CHEBI:49883"/>
    </ligand>
</feature>
<feature type="binding site" evidence="1">
    <location>
        <position position="307"/>
    </location>
    <ligand>
        <name>[4Fe-4S] cluster</name>
        <dbReference type="ChEBI" id="CHEBI:49883"/>
    </ligand>
</feature>
<feature type="turn" evidence="3">
    <location>
        <begin position="4"/>
        <end position="6"/>
    </location>
</feature>
<feature type="strand" evidence="3">
    <location>
        <begin position="10"/>
        <end position="12"/>
    </location>
</feature>
<feature type="strand" evidence="3">
    <location>
        <begin position="15"/>
        <end position="21"/>
    </location>
</feature>
<feature type="strand" evidence="3">
    <location>
        <begin position="24"/>
        <end position="28"/>
    </location>
</feature>
<feature type="helix" evidence="3">
    <location>
        <begin position="36"/>
        <end position="48"/>
    </location>
</feature>
<feature type="strand" evidence="3">
    <location>
        <begin position="53"/>
        <end position="57"/>
    </location>
</feature>
<feature type="helix" evidence="3">
    <location>
        <begin position="61"/>
        <end position="64"/>
    </location>
</feature>
<feature type="helix" evidence="3">
    <location>
        <begin position="67"/>
        <end position="71"/>
    </location>
</feature>
<feature type="strand" evidence="3">
    <location>
        <begin position="78"/>
        <end position="81"/>
    </location>
</feature>
<feature type="helix" evidence="3">
    <location>
        <begin position="86"/>
        <end position="94"/>
    </location>
</feature>
<feature type="strand" evidence="3">
    <location>
        <begin position="98"/>
        <end position="101"/>
    </location>
</feature>
<feature type="helix" evidence="3">
    <location>
        <begin position="104"/>
        <end position="106"/>
    </location>
</feature>
<feature type="helix" evidence="3">
    <location>
        <begin position="110"/>
        <end position="123"/>
    </location>
</feature>
<feature type="strand" evidence="3">
    <location>
        <begin position="127"/>
        <end position="132"/>
    </location>
</feature>
<feature type="helix" evidence="3">
    <location>
        <begin position="133"/>
        <end position="135"/>
    </location>
</feature>
<feature type="helix" evidence="3">
    <location>
        <begin position="138"/>
        <end position="144"/>
    </location>
</feature>
<feature type="helix" evidence="3">
    <location>
        <begin position="149"/>
        <end position="164"/>
    </location>
</feature>
<feature type="turn" evidence="3">
    <location>
        <begin position="165"/>
        <end position="167"/>
    </location>
</feature>
<feature type="strand" evidence="3">
    <location>
        <begin position="171"/>
        <end position="176"/>
    </location>
</feature>
<feature type="helix" evidence="3">
    <location>
        <begin position="180"/>
        <end position="193"/>
    </location>
</feature>
<feature type="strand" evidence="3">
    <location>
        <begin position="198"/>
        <end position="200"/>
    </location>
</feature>
<feature type="helix" evidence="3">
    <location>
        <begin position="208"/>
        <end position="224"/>
    </location>
</feature>
<feature type="strand" evidence="3">
    <location>
        <begin position="229"/>
        <end position="232"/>
    </location>
</feature>
<feature type="helix" evidence="3">
    <location>
        <begin position="239"/>
        <end position="252"/>
    </location>
</feature>
<name>ISPG_BACAN</name>
<keyword id="KW-0002">3D-structure</keyword>
<keyword id="KW-0004">4Fe-4S</keyword>
<keyword id="KW-0408">Iron</keyword>
<keyword id="KW-0411">Iron-sulfur</keyword>
<keyword id="KW-0414">Isoprene biosynthesis</keyword>
<keyword id="KW-0479">Metal-binding</keyword>
<keyword id="KW-0560">Oxidoreductase</keyword>
<keyword id="KW-1185">Reference proteome</keyword>
<sequence>MTHRTKTRPVKVGNLTIGGNNELIIQSMTTTKTHDVEATVAEIKRLEEAGCQVVRVAVPDERAANAIADIKKQINIPLVADIHFDYRLALKAIEGGIDKVRINPGNIGRRHKVEAVVNAAKERGIPIRIGVNAGSLERHILEKYGYPTADGMVESALHHIKILEDLDFHDIIVSMKASDVNLAIEAYEKAARAFDYPLHLGITESGTLFAGTVKSAAGLGAILNKGIGNTLRISLSADPVEEVKVARELLKSFGLASNAATLISCPTCGRIEIDLISIANEVEEYISTLQVPIKVAVLGCAVNGPGEAREADIGIAGARGEGLLFRKGQVVRKVPEEIMVEELKKEIDVIAAEMAAEREKEKETQEQ</sequence>
<organism>
    <name type="scientific">Bacillus anthracis</name>
    <dbReference type="NCBI Taxonomy" id="1392"/>
    <lineage>
        <taxon>Bacteria</taxon>
        <taxon>Bacillati</taxon>
        <taxon>Bacillota</taxon>
        <taxon>Bacilli</taxon>
        <taxon>Bacillales</taxon>
        <taxon>Bacillaceae</taxon>
        <taxon>Bacillus</taxon>
        <taxon>Bacillus cereus group</taxon>
    </lineage>
</organism>
<accession>Q81LV7</accession>
<accession>Q6HTA9</accession>
<accession>Q6KMK1</accession>
<dbReference type="EC" id="1.17.7.3" evidence="1"/>
<dbReference type="EMBL" id="AE016879">
    <property type="protein sequence ID" value="AAP28213.1"/>
    <property type="molecule type" value="Genomic_DNA"/>
</dbReference>
<dbReference type="EMBL" id="AE017334">
    <property type="protein sequence ID" value="AAT33621.1"/>
    <property type="molecule type" value="Genomic_DNA"/>
</dbReference>
<dbReference type="EMBL" id="AE017225">
    <property type="protein sequence ID" value="AAT56480.1"/>
    <property type="status" value="ALT_INIT"/>
    <property type="molecule type" value="Genomic_DNA"/>
</dbReference>
<dbReference type="RefSeq" id="NP_846727.1">
    <property type="nucleotide sequence ID" value="NC_003997.3"/>
</dbReference>
<dbReference type="RefSeq" id="WP_002194540.1">
    <property type="nucleotide sequence ID" value="NZ_WXXJ01000027.1"/>
</dbReference>
<dbReference type="PDB" id="4MWA">
    <property type="method" value="X-ray"/>
    <property type="resolution" value="1.85 A"/>
    <property type="chains" value="A/B/C/D/E/F/G/H=1-270"/>
</dbReference>
<dbReference type="PDBsum" id="4MWA"/>
<dbReference type="SMR" id="Q81LV7"/>
<dbReference type="STRING" id="261594.GBAA_4502"/>
<dbReference type="DNASU" id="1088122"/>
<dbReference type="GeneID" id="93006820"/>
<dbReference type="KEGG" id="ban:BA_4502"/>
<dbReference type="KEGG" id="bar:GBAA_4502"/>
<dbReference type="KEGG" id="bat:BAS4180"/>
<dbReference type="PATRIC" id="fig|198094.11.peg.4470"/>
<dbReference type="eggNOG" id="COG0821">
    <property type="taxonomic scope" value="Bacteria"/>
</dbReference>
<dbReference type="HOGENOM" id="CLU_042258_0_0_9"/>
<dbReference type="OrthoDB" id="9803214at2"/>
<dbReference type="UniPathway" id="UPA00056">
    <property type="reaction ID" value="UER00096"/>
</dbReference>
<dbReference type="EvolutionaryTrace" id="Q81LV7"/>
<dbReference type="Proteomes" id="UP000000427">
    <property type="component" value="Chromosome"/>
</dbReference>
<dbReference type="Proteomes" id="UP000000594">
    <property type="component" value="Chromosome"/>
</dbReference>
<dbReference type="GO" id="GO:0051539">
    <property type="term" value="F:4 iron, 4 sulfur cluster binding"/>
    <property type="evidence" value="ECO:0007669"/>
    <property type="project" value="UniProtKB-UniRule"/>
</dbReference>
<dbReference type="GO" id="GO:0046429">
    <property type="term" value="F:4-hydroxy-3-methylbut-2-en-1-yl diphosphate synthase activity (ferredoxin)"/>
    <property type="evidence" value="ECO:0007669"/>
    <property type="project" value="UniProtKB-UniRule"/>
</dbReference>
<dbReference type="GO" id="GO:0141197">
    <property type="term" value="F:4-hydroxy-3-methylbut-2-enyl-diphosphate synthase activity (flavodoxin)"/>
    <property type="evidence" value="ECO:0007669"/>
    <property type="project" value="UniProtKB-EC"/>
</dbReference>
<dbReference type="GO" id="GO:0005506">
    <property type="term" value="F:iron ion binding"/>
    <property type="evidence" value="ECO:0007669"/>
    <property type="project" value="InterPro"/>
</dbReference>
<dbReference type="GO" id="GO:0019288">
    <property type="term" value="P:isopentenyl diphosphate biosynthetic process, methylerythritol 4-phosphate pathway"/>
    <property type="evidence" value="ECO:0007669"/>
    <property type="project" value="UniProtKB-UniRule"/>
</dbReference>
<dbReference type="GO" id="GO:0016114">
    <property type="term" value="P:terpenoid biosynthetic process"/>
    <property type="evidence" value="ECO:0007669"/>
    <property type="project" value="InterPro"/>
</dbReference>
<dbReference type="FunFam" id="3.20.20.20:FF:000001">
    <property type="entry name" value="4-hydroxy-3-methylbut-2-en-1-yl diphosphate synthase (flavodoxin)"/>
    <property type="match status" value="1"/>
</dbReference>
<dbReference type="FunFam" id="3.30.413.10:FF:000005">
    <property type="entry name" value="4-hydroxy-3-methylbut-2-en-1-yl diphosphate synthase (flavodoxin)"/>
    <property type="match status" value="1"/>
</dbReference>
<dbReference type="Gene3D" id="3.20.20.20">
    <property type="entry name" value="Dihydropteroate synthase-like"/>
    <property type="match status" value="1"/>
</dbReference>
<dbReference type="Gene3D" id="3.30.413.10">
    <property type="entry name" value="Sulfite Reductase Hemoprotein, domain 1"/>
    <property type="match status" value="1"/>
</dbReference>
<dbReference type="HAMAP" id="MF_00159">
    <property type="entry name" value="IspG"/>
    <property type="match status" value="1"/>
</dbReference>
<dbReference type="InterPro" id="IPR011005">
    <property type="entry name" value="Dihydropteroate_synth-like_sf"/>
</dbReference>
<dbReference type="InterPro" id="IPR016425">
    <property type="entry name" value="IspG_bac"/>
</dbReference>
<dbReference type="InterPro" id="IPR004588">
    <property type="entry name" value="IspG_bac-typ"/>
</dbReference>
<dbReference type="InterPro" id="IPR045854">
    <property type="entry name" value="NO2/SO3_Rdtase_4Fe4S_sf"/>
</dbReference>
<dbReference type="NCBIfam" id="TIGR00612">
    <property type="entry name" value="ispG_gcpE"/>
    <property type="match status" value="1"/>
</dbReference>
<dbReference type="NCBIfam" id="NF001540">
    <property type="entry name" value="PRK00366.1"/>
    <property type="match status" value="1"/>
</dbReference>
<dbReference type="PANTHER" id="PTHR30454">
    <property type="entry name" value="4-HYDROXY-3-METHYLBUT-2-EN-1-YL DIPHOSPHATE SYNTHASE"/>
    <property type="match status" value="1"/>
</dbReference>
<dbReference type="PANTHER" id="PTHR30454:SF0">
    <property type="entry name" value="4-HYDROXY-3-METHYLBUT-2-EN-1-YL DIPHOSPHATE SYNTHASE (FERREDOXIN), CHLOROPLASTIC"/>
    <property type="match status" value="1"/>
</dbReference>
<dbReference type="Pfam" id="PF04551">
    <property type="entry name" value="GcpE"/>
    <property type="match status" value="1"/>
</dbReference>
<dbReference type="PIRSF" id="PIRSF004640">
    <property type="entry name" value="IspG"/>
    <property type="match status" value="1"/>
</dbReference>
<dbReference type="SUPFAM" id="SSF51717">
    <property type="entry name" value="Dihydropteroate synthetase-like"/>
    <property type="match status" value="1"/>
</dbReference>
<dbReference type="SUPFAM" id="SSF56014">
    <property type="entry name" value="Nitrite and sulphite reductase 4Fe-4S domain-like"/>
    <property type="match status" value="1"/>
</dbReference>